<feature type="chain" id="PRO_1000062132" description="Large ribosomal subunit protein uL11">
    <location>
        <begin position="1"/>
        <end position="141"/>
    </location>
</feature>
<accession>A8MLC8</accession>
<dbReference type="EMBL" id="CP000853">
    <property type="protein sequence ID" value="ABW18042.1"/>
    <property type="molecule type" value="Genomic_DNA"/>
</dbReference>
<dbReference type="RefSeq" id="WP_012158357.1">
    <property type="nucleotide sequence ID" value="NC_009922.1"/>
</dbReference>
<dbReference type="SMR" id="A8MLC8"/>
<dbReference type="STRING" id="350688.Clos_0480"/>
<dbReference type="KEGG" id="aoe:Clos_0480"/>
<dbReference type="eggNOG" id="COG0080">
    <property type="taxonomic scope" value="Bacteria"/>
</dbReference>
<dbReference type="HOGENOM" id="CLU_074237_2_1_9"/>
<dbReference type="OrthoDB" id="9802408at2"/>
<dbReference type="Proteomes" id="UP000000269">
    <property type="component" value="Chromosome"/>
</dbReference>
<dbReference type="GO" id="GO:0022625">
    <property type="term" value="C:cytosolic large ribosomal subunit"/>
    <property type="evidence" value="ECO:0007669"/>
    <property type="project" value="TreeGrafter"/>
</dbReference>
<dbReference type="GO" id="GO:0070180">
    <property type="term" value="F:large ribosomal subunit rRNA binding"/>
    <property type="evidence" value="ECO:0007669"/>
    <property type="project" value="UniProtKB-UniRule"/>
</dbReference>
<dbReference type="GO" id="GO:0003735">
    <property type="term" value="F:structural constituent of ribosome"/>
    <property type="evidence" value="ECO:0007669"/>
    <property type="project" value="InterPro"/>
</dbReference>
<dbReference type="GO" id="GO:0006412">
    <property type="term" value="P:translation"/>
    <property type="evidence" value="ECO:0007669"/>
    <property type="project" value="UniProtKB-UniRule"/>
</dbReference>
<dbReference type="CDD" id="cd00349">
    <property type="entry name" value="Ribosomal_L11"/>
    <property type="match status" value="1"/>
</dbReference>
<dbReference type="FunFam" id="1.10.10.250:FF:000001">
    <property type="entry name" value="50S ribosomal protein L11"/>
    <property type="match status" value="1"/>
</dbReference>
<dbReference type="FunFam" id="3.30.1550.10:FF:000001">
    <property type="entry name" value="50S ribosomal protein L11"/>
    <property type="match status" value="1"/>
</dbReference>
<dbReference type="Gene3D" id="1.10.10.250">
    <property type="entry name" value="Ribosomal protein L11, C-terminal domain"/>
    <property type="match status" value="1"/>
</dbReference>
<dbReference type="Gene3D" id="3.30.1550.10">
    <property type="entry name" value="Ribosomal protein L11/L12, N-terminal domain"/>
    <property type="match status" value="1"/>
</dbReference>
<dbReference type="HAMAP" id="MF_00736">
    <property type="entry name" value="Ribosomal_uL11"/>
    <property type="match status" value="1"/>
</dbReference>
<dbReference type="InterPro" id="IPR000911">
    <property type="entry name" value="Ribosomal_uL11"/>
</dbReference>
<dbReference type="InterPro" id="IPR006519">
    <property type="entry name" value="Ribosomal_uL11_bac-typ"/>
</dbReference>
<dbReference type="InterPro" id="IPR020783">
    <property type="entry name" value="Ribosomal_uL11_C"/>
</dbReference>
<dbReference type="InterPro" id="IPR036769">
    <property type="entry name" value="Ribosomal_uL11_C_sf"/>
</dbReference>
<dbReference type="InterPro" id="IPR020784">
    <property type="entry name" value="Ribosomal_uL11_N"/>
</dbReference>
<dbReference type="InterPro" id="IPR036796">
    <property type="entry name" value="Ribosomal_uL11_N_sf"/>
</dbReference>
<dbReference type="NCBIfam" id="TIGR01632">
    <property type="entry name" value="L11_bact"/>
    <property type="match status" value="1"/>
</dbReference>
<dbReference type="PANTHER" id="PTHR11661">
    <property type="entry name" value="60S RIBOSOMAL PROTEIN L12"/>
    <property type="match status" value="1"/>
</dbReference>
<dbReference type="PANTHER" id="PTHR11661:SF1">
    <property type="entry name" value="LARGE RIBOSOMAL SUBUNIT PROTEIN UL11M"/>
    <property type="match status" value="1"/>
</dbReference>
<dbReference type="Pfam" id="PF00298">
    <property type="entry name" value="Ribosomal_L11"/>
    <property type="match status" value="1"/>
</dbReference>
<dbReference type="Pfam" id="PF03946">
    <property type="entry name" value="Ribosomal_L11_N"/>
    <property type="match status" value="1"/>
</dbReference>
<dbReference type="SMART" id="SM00649">
    <property type="entry name" value="RL11"/>
    <property type="match status" value="1"/>
</dbReference>
<dbReference type="SUPFAM" id="SSF54747">
    <property type="entry name" value="Ribosomal L11/L12e N-terminal domain"/>
    <property type="match status" value="1"/>
</dbReference>
<dbReference type="SUPFAM" id="SSF46906">
    <property type="entry name" value="Ribosomal protein L11, C-terminal domain"/>
    <property type="match status" value="1"/>
</dbReference>
<name>RL11_ALKOO</name>
<reference key="1">
    <citation type="submission" date="2007-10" db="EMBL/GenBank/DDBJ databases">
        <title>Complete genome of Alkaliphilus oremlandii OhILAs.</title>
        <authorList>
            <person name="Copeland A."/>
            <person name="Lucas S."/>
            <person name="Lapidus A."/>
            <person name="Barry K."/>
            <person name="Detter J.C."/>
            <person name="Glavina del Rio T."/>
            <person name="Hammon N."/>
            <person name="Israni S."/>
            <person name="Dalin E."/>
            <person name="Tice H."/>
            <person name="Pitluck S."/>
            <person name="Chain P."/>
            <person name="Malfatti S."/>
            <person name="Shin M."/>
            <person name="Vergez L."/>
            <person name="Schmutz J."/>
            <person name="Larimer F."/>
            <person name="Land M."/>
            <person name="Hauser L."/>
            <person name="Kyrpides N."/>
            <person name="Mikhailova N."/>
            <person name="Stolz J.F."/>
            <person name="Dawson A."/>
            <person name="Fisher E."/>
            <person name="Crable B."/>
            <person name="Perera E."/>
            <person name="Lisak J."/>
            <person name="Ranganathan M."/>
            <person name="Basu P."/>
            <person name="Richardson P."/>
        </authorList>
    </citation>
    <scope>NUCLEOTIDE SEQUENCE [LARGE SCALE GENOMIC DNA]</scope>
    <source>
        <strain>OhILAs</strain>
    </source>
</reference>
<evidence type="ECO:0000255" key="1">
    <source>
        <dbReference type="HAMAP-Rule" id="MF_00736"/>
    </source>
</evidence>
<evidence type="ECO:0000305" key="2"/>
<organism>
    <name type="scientific">Alkaliphilus oremlandii (strain OhILAs)</name>
    <name type="common">Clostridium oremlandii (strain OhILAs)</name>
    <dbReference type="NCBI Taxonomy" id="350688"/>
    <lineage>
        <taxon>Bacteria</taxon>
        <taxon>Bacillati</taxon>
        <taxon>Bacillota</taxon>
        <taxon>Clostridia</taxon>
        <taxon>Peptostreptococcales</taxon>
        <taxon>Natronincolaceae</taxon>
        <taxon>Alkaliphilus</taxon>
    </lineage>
</organism>
<sequence>MAKKIVGQIKLQINAGKATPAPPVGPALGQHGVNIMGFCKEFNAKTADQAGLIIPVVISVYQDRSYSFITKTPPAAVLIKKAIGIQSGSGEPNKKKVAKISKDKIREIAELKMPDLNAASLEAAMSMISGTARSMGVVVED</sequence>
<protein>
    <recommendedName>
        <fullName evidence="1">Large ribosomal subunit protein uL11</fullName>
    </recommendedName>
    <alternativeName>
        <fullName evidence="2">50S ribosomal protein L11</fullName>
    </alternativeName>
</protein>
<comment type="function">
    <text evidence="1">Forms part of the ribosomal stalk which helps the ribosome interact with GTP-bound translation factors.</text>
</comment>
<comment type="subunit">
    <text evidence="1">Part of the ribosomal stalk of the 50S ribosomal subunit. Interacts with L10 and the large rRNA to form the base of the stalk. L10 forms an elongated spine to which L12 dimers bind in a sequential fashion forming a multimeric L10(L12)X complex.</text>
</comment>
<comment type="PTM">
    <text evidence="1">One or more lysine residues are methylated.</text>
</comment>
<comment type="similarity">
    <text evidence="1">Belongs to the universal ribosomal protein uL11 family.</text>
</comment>
<proteinExistence type="inferred from homology"/>
<keyword id="KW-0488">Methylation</keyword>
<keyword id="KW-1185">Reference proteome</keyword>
<keyword id="KW-0687">Ribonucleoprotein</keyword>
<keyword id="KW-0689">Ribosomal protein</keyword>
<keyword id="KW-0694">RNA-binding</keyword>
<keyword id="KW-0699">rRNA-binding</keyword>
<gene>
    <name evidence="1" type="primary">rplK</name>
    <name type="ordered locus">Clos_0480</name>
</gene>